<accession>Q8NVH0</accession>
<sequence>MKKTLLASSLAVGLGIVAGNAGHEAHASEADLNKASLAQMAQSNDQTLNQKPIEAGAYNYTFDYEGFTYHFESDGTHFAWNYHATGTNGADMSAQAPATNNVAPSAVQANQVQSQEVEAPQNAQTQQPQASTSNNSQVTATPTESKSSEGSSVNVNAHLKQIAQRESGGNIHAVNPTSGAAGKYQFLQSTWDSVAPAKYKGVSPANAPESVQDAAAVKLYNTGGAGHWVTA</sequence>
<reference key="1">
    <citation type="journal article" date="2002" name="Lancet">
        <title>Genome and virulence determinants of high virulence community-acquired MRSA.</title>
        <authorList>
            <person name="Baba T."/>
            <person name="Takeuchi F."/>
            <person name="Kuroda M."/>
            <person name="Yuzawa H."/>
            <person name="Aoki K."/>
            <person name="Oguchi A."/>
            <person name="Nagai Y."/>
            <person name="Iwama N."/>
            <person name="Asano K."/>
            <person name="Naimi T."/>
            <person name="Kuroda H."/>
            <person name="Cui L."/>
            <person name="Yamamoto K."/>
            <person name="Hiramatsu K."/>
        </authorList>
    </citation>
    <scope>NUCLEOTIDE SEQUENCE [LARGE SCALE GENOMIC DNA]</scope>
    <source>
        <strain>MW2</strain>
    </source>
</reference>
<proteinExistence type="inferred from homology"/>
<organism>
    <name type="scientific">Staphylococcus aureus (strain MW2)</name>
    <dbReference type="NCBI Taxonomy" id="196620"/>
    <lineage>
        <taxon>Bacteria</taxon>
        <taxon>Bacillati</taxon>
        <taxon>Bacillota</taxon>
        <taxon>Bacilli</taxon>
        <taxon>Bacillales</taxon>
        <taxon>Staphylococcaceae</taxon>
        <taxon>Staphylococcus</taxon>
    </lineage>
</organism>
<feature type="signal peptide" evidence="2">
    <location>
        <begin position="1"/>
        <end position="27"/>
    </location>
</feature>
<feature type="chain" id="PRO_0000320317" description="Probable transglycosylase SceD">
    <location>
        <begin position="28"/>
        <end position="231"/>
    </location>
</feature>
<feature type="region of interest" description="Disordered" evidence="3">
    <location>
        <begin position="106"/>
        <end position="153"/>
    </location>
</feature>
<feature type="compositionally biased region" description="Polar residues" evidence="3">
    <location>
        <begin position="106"/>
        <end position="116"/>
    </location>
</feature>
<feature type="compositionally biased region" description="Low complexity" evidence="3">
    <location>
        <begin position="119"/>
        <end position="137"/>
    </location>
</feature>
<feature type="compositionally biased region" description="Polar residues" evidence="3">
    <location>
        <begin position="138"/>
        <end position="153"/>
    </location>
</feature>
<name>SCED_STAAW</name>
<dbReference type="EC" id="3.2.-.-"/>
<dbReference type="EMBL" id="BA000033">
    <property type="protein sequence ID" value="BAB95885.1"/>
    <property type="molecule type" value="Genomic_DNA"/>
</dbReference>
<dbReference type="RefSeq" id="WP_000752008.1">
    <property type="nucleotide sequence ID" value="NC_003923.1"/>
</dbReference>
<dbReference type="SMR" id="Q8NVH0"/>
<dbReference type="CAZy" id="GH23">
    <property type="family name" value="Glycoside Hydrolase Family 23"/>
</dbReference>
<dbReference type="KEGG" id="sam:MW2020"/>
<dbReference type="HOGENOM" id="CLU_099865_0_0_9"/>
<dbReference type="GO" id="GO:0005576">
    <property type="term" value="C:extracellular region"/>
    <property type="evidence" value="ECO:0007669"/>
    <property type="project" value="UniProtKB-SubCell"/>
</dbReference>
<dbReference type="GO" id="GO:0016798">
    <property type="term" value="F:hydrolase activity, acting on glycosyl bonds"/>
    <property type="evidence" value="ECO:0007669"/>
    <property type="project" value="UniProtKB-KW"/>
</dbReference>
<dbReference type="CDD" id="cd13925">
    <property type="entry name" value="RPF"/>
    <property type="match status" value="1"/>
</dbReference>
<dbReference type="Gene3D" id="1.10.530.10">
    <property type="match status" value="1"/>
</dbReference>
<dbReference type="InterPro" id="IPR023346">
    <property type="entry name" value="Lysozyme-like_dom_sf"/>
</dbReference>
<dbReference type="InterPro" id="IPR010618">
    <property type="entry name" value="RPF"/>
</dbReference>
<dbReference type="Pfam" id="PF06737">
    <property type="entry name" value="Transglycosylas"/>
    <property type="match status" value="1"/>
</dbReference>
<dbReference type="SUPFAM" id="SSF53955">
    <property type="entry name" value="Lysozyme-like"/>
    <property type="match status" value="1"/>
</dbReference>
<comment type="function">
    <text evidence="1">Is able to cleave peptidoglycan and affects clumping and separation of bacterial cells.</text>
</comment>
<comment type="subcellular location">
    <subcellularLocation>
        <location evidence="1">Secreted</location>
    </subcellularLocation>
</comment>
<comment type="induction">
    <text evidence="1">Positively regulated by sigma B factor.</text>
</comment>
<comment type="similarity">
    <text evidence="4">Belongs to the transglycosylase family. SceD subfamily.</text>
</comment>
<gene>
    <name type="primary">sceD</name>
    <name type="ordered locus">MW2020</name>
</gene>
<protein>
    <recommendedName>
        <fullName>Probable transglycosylase SceD</fullName>
        <ecNumber>3.2.-.-</ecNumber>
    </recommendedName>
</protein>
<keyword id="KW-0326">Glycosidase</keyword>
<keyword id="KW-0378">Hydrolase</keyword>
<keyword id="KW-0964">Secreted</keyword>
<keyword id="KW-0732">Signal</keyword>
<evidence type="ECO:0000250" key="1"/>
<evidence type="ECO:0000255" key="2"/>
<evidence type="ECO:0000256" key="3">
    <source>
        <dbReference type="SAM" id="MobiDB-lite"/>
    </source>
</evidence>
<evidence type="ECO:0000305" key="4"/>